<name>HPRT_METTM</name>
<accession>O33174</accession>
<accession>D9PYH7</accession>
<evidence type="ECO:0000250" key="1"/>
<evidence type="ECO:0000269" key="2">
    <source>
    </source>
</evidence>
<evidence type="ECO:0000303" key="3">
    <source>
    </source>
</evidence>
<evidence type="ECO:0000305" key="4"/>
<sequence>MLDKLKESLRNSPVIKKGEYDYFVNPVTDGIPLTEPELLEEIADEIVRRFNPDPASVDKIVCIEAMGIHHATVLSLKTRIPFVVVRKRRYGLPGEVAVHQMTGYSEGELYINGVDGDDRVMVIDDVVSTGGTLLAVLEALREMEVEVVDVVTVIDKGEGSRVVKERTGFTVRSLVKADVVDGRVTVEDIPDGG</sequence>
<proteinExistence type="evidence at protein level"/>
<comment type="function">
    <text evidence="2">Catalyzes a salvage reaction resulting in the formation of IMP that is energically less costly than de novo synthesis. Prefers hypoxanthine, has 66% activity with guanine while activity with adenine, xanthine, uracil, orotate, or cytosine is negligible.</text>
</comment>
<comment type="catalytic activity">
    <reaction evidence="2">
        <text>IMP + diphosphate = hypoxanthine + 5-phospho-alpha-D-ribose 1-diphosphate</text>
        <dbReference type="Rhea" id="RHEA:17973"/>
        <dbReference type="ChEBI" id="CHEBI:17368"/>
        <dbReference type="ChEBI" id="CHEBI:33019"/>
        <dbReference type="ChEBI" id="CHEBI:58017"/>
        <dbReference type="ChEBI" id="CHEBI:58053"/>
        <dbReference type="EC" id="2.4.2.8"/>
    </reaction>
</comment>
<comment type="catalytic activity">
    <reaction evidence="2">
        <text>GMP + diphosphate = guanine + 5-phospho-alpha-D-ribose 1-diphosphate</text>
        <dbReference type="Rhea" id="RHEA:25424"/>
        <dbReference type="ChEBI" id="CHEBI:16235"/>
        <dbReference type="ChEBI" id="CHEBI:33019"/>
        <dbReference type="ChEBI" id="CHEBI:58017"/>
        <dbReference type="ChEBI" id="CHEBI:58115"/>
        <dbReference type="EC" id="2.4.2.8"/>
    </reaction>
</comment>
<comment type="biophysicochemical properties">
    <phDependence>
        <text evidence="2">Optimum pH is 7.6-8.2.</text>
    </phDependence>
    <temperatureDependence>
        <text evidence="2">Optimum temperature is 70-80 degrees Celsius.</text>
    </temperatureDependence>
</comment>
<comment type="pathway">
    <text evidence="2">Purine metabolism; IMP biosynthesis via salvage pathway; IMP from hypoxanthine: step 1/1.</text>
</comment>
<comment type="subunit">
    <text evidence="1">Homodimer.</text>
</comment>
<comment type="subcellular location">
    <subcellularLocation>
        <location evidence="4">Cytoplasm</location>
    </subcellularLocation>
</comment>
<comment type="similarity">
    <text evidence="4">Belongs to the purine/pyrimidine phosphoribosyltransferase family. Archaeal HPRT subfamily.</text>
</comment>
<dbReference type="EC" id="2.4.2.8" evidence="2"/>
<dbReference type="EMBL" id="AF007759">
    <property type="protein sequence ID" value="AAB62272.1"/>
    <property type="molecule type" value="Genomic_DNA"/>
</dbReference>
<dbReference type="EMBL" id="CP001710">
    <property type="protein sequence ID" value="ADL59275.1"/>
    <property type="molecule type" value="Genomic_DNA"/>
</dbReference>
<dbReference type="RefSeq" id="WP_013296485.1">
    <property type="nucleotide sequence ID" value="NC_014408.1"/>
</dbReference>
<dbReference type="SMR" id="O33174"/>
<dbReference type="STRING" id="79929.MTBMA_c17060"/>
<dbReference type="PaxDb" id="79929-MTBMA_c17060"/>
<dbReference type="GeneID" id="43707565"/>
<dbReference type="GeneID" id="9705417"/>
<dbReference type="KEGG" id="mmg:MTBMA_c17060"/>
<dbReference type="PATRIC" id="fig|79929.8.peg.1646"/>
<dbReference type="HOGENOM" id="CLU_126376_0_0_2"/>
<dbReference type="OrthoDB" id="8323at2157"/>
<dbReference type="UniPathway" id="UPA00591">
    <property type="reaction ID" value="UER00648"/>
</dbReference>
<dbReference type="Proteomes" id="UP000000345">
    <property type="component" value="Chromosome"/>
</dbReference>
<dbReference type="GO" id="GO:0005737">
    <property type="term" value="C:cytoplasm"/>
    <property type="evidence" value="ECO:0007669"/>
    <property type="project" value="UniProtKB-SubCell"/>
</dbReference>
<dbReference type="GO" id="GO:0052657">
    <property type="term" value="F:guanine phosphoribosyltransferase activity"/>
    <property type="evidence" value="ECO:0007669"/>
    <property type="project" value="RHEA"/>
</dbReference>
<dbReference type="GO" id="GO:0004422">
    <property type="term" value="F:hypoxanthine phosphoribosyltransferase activity"/>
    <property type="evidence" value="ECO:0000314"/>
    <property type="project" value="UniProtKB"/>
</dbReference>
<dbReference type="GO" id="GO:0043103">
    <property type="term" value="P:hypoxanthine salvage"/>
    <property type="evidence" value="ECO:0000304"/>
    <property type="project" value="UniProtKB"/>
</dbReference>
<dbReference type="GO" id="GO:0032264">
    <property type="term" value="P:IMP salvage"/>
    <property type="evidence" value="ECO:0007669"/>
    <property type="project" value="UniProtKB-UniRule"/>
</dbReference>
<dbReference type="GO" id="GO:0006166">
    <property type="term" value="P:purine ribonucleoside salvage"/>
    <property type="evidence" value="ECO:0007669"/>
    <property type="project" value="UniProtKB-KW"/>
</dbReference>
<dbReference type="CDD" id="cd06223">
    <property type="entry name" value="PRTases_typeI"/>
    <property type="match status" value="1"/>
</dbReference>
<dbReference type="Gene3D" id="3.40.50.2020">
    <property type="match status" value="1"/>
</dbReference>
<dbReference type="HAMAP" id="MF_01467">
    <property type="entry name" value="Hypx_phosphoribosyltr"/>
    <property type="match status" value="1"/>
</dbReference>
<dbReference type="InterPro" id="IPR026597">
    <property type="entry name" value="HGPRTase-like"/>
</dbReference>
<dbReference type="InterPro" id="IPR000836">
    <property type="entry name" value="PRibTrfase_dom"/>
</dbReference>
<dbReference type="InterPro" id="IPR029057">
    <property type="entry name" value="PRTase-like"/>
</dbReference>
<dbReference type="InterPro" id="IPR050118">
    <property type="entry name" value="Pur/Pyrimidine_PRTase"/>
</dbReference>
<dbReference type="NCBIfam" id="NF040646">
    <property type="entry name" value="HPT_Archaea"/>
    <property type="match status" value="1"/>
</dbReference>
<dbReference type="NCBIfam" id="NF002635">
    <property type="entry name" value="PRK02304.1-4"/>
    <property type="match status" value="1"/>
</dbReference>
<dbReference type="PANTHER" id="PTHR43864">
    <property type="entry name" value="HYPOXANTHINE/GUANINE PHOSPHORIBOSYLTRANSFERASE"/>
    <property type="match status" value="1"/>
</dbReference>
<dbReference type="PANTHER" id="PTHR43864:SF1">
    <property type="entry name" value="XANTHINE PHOSPHORIBOSYLTRANSFERASE"/>
    <property type="match status" value="1"/>
</dbReference>
<dbReference type="Pfam" id="PF00156">
    <property type="entry name" value="Pribosyltran"/>
    <property type="match status" value="1"/>
</dbReference>
<dbReference type="SUPFAM" id="SSF53271">
    <property type="entry name" value="PRTase-like"/>
    <property type="match status" value="1"/>
</dbReference>
<dbReference type="PROSITE" id="PS00103">
    <property type="entry name" value="PUR_PYR_PR_TRANSFER"/>
    <property type="match status" value="1"/>
</dbReference>
<reference key="1">
    <citation type="journal article" date="1999" name="J. Bacteriol.">
        <title>Expression of the Methanobacterium thermoautotrophicum hpt gene, encoding hypoxanthine (Guanine) phosphoribosyltransferase, in Escherichia coli.</title>
        <authorList>
            <person name="Sauer J."/>
            <person name="Nygaard P."/>
        </authorList>
    </citation>
    <scope>NUCLEOTIDE SEQUENCE [GENOMIC DNA]</scope>
    <scope>PROTEIN SEQUENCE OF 1-10</scope>
    <scope>FUNCTION AS AN HGPRTASE</scope>
    <scope>CATALYTIC ACTIVITY</scope>
    <scope>SUBSTRATE SPECIFICITY</scope>
    <scope>BIOPHYSICOCHEMICAL PROPERTIES</scope>
    <source>
        <strain>ATCC BAA-927 / DSM 2133 / JCM 14651 / NBRC 100331 / OCM 82 / Marburg</strain>
    </source>
</reference>
<reference key="2">
    <citation type="journal article" date="2010" name="J. Bacteriol.">
        <title>Complete genome sequence of Methanothermobacter marburgensis, a methanoarchaeon model organism.</title>
        <authorList>
            <person name="Liesegang H."/>
            <person name="Kaster A.K."/>
            <person name="Wiezer A."/>
            <person name="Goenrich M."/>
            <person name="Wollherr A."/>
            <person name="Seedorf H."/>
            <person name="Gottschalk G."/>
            <person name="Thauer R.K."/>
        </authorList>
    </citation>
    <scope>NUCLEOTIDE SEQUENCE [LARGE SCALE GENOMIC DNA]</scope>
    <source>
        <strain>ATCC BAA-927 / DSM 2133 / JCM 14651 / NBRC 100331 / OCM 82 / Marburg</strain>
    </source>
</reference>
<gene>
    <name evidence="3" type="primary">hpt</name>
    <name type="ordered locus">MTBMA_c17060</name>
</gene>
<protein>
    <recommendedName>
        <fullName>Hypoxanthine/guanine phosphoribosyltransferase</fullName>
        <shortName>HGPRTase</shortName>
        <ecNumber evidence="2">2.4.2.8</ecNumber>
    </recommendedName>
    <alternativeName>
        <fullName>Hypoxanthine (guanine) phosphoribosyltransferase</fullName>
    </alternativeName>
</protein>
<keyword id="KW-0963">Cytoplasm</keyword>
<keyword id="KW-0903">Direct protein sequencing</keyword>
<keyword id="KW-0328">Glycosyltransferase</keyword>
<keyword id="KW-0660">Purine salvage</keyword>
<keyword id="KW-0808">Transferase</keyword>
<feature type="chain" id="PRO_0000149500" description="Hypoxanthine/guanine phosphoribosyltransferase">
    <location>
        <begin position="1"/>
        <end position="193"/>
    </location>
</feature>
<organism>
    <name type="scientific">Methanothermobacter marburgensis (strain ATCC BAA-927 / DSM 2133 / JCM 14651 / NBRC 100331 / OCM 82 / Marburg)</name>
    <name type="common">Methanobacterium thermoautotrophicum</name>
    <dbReference type="NCBI Taxonomy" id="79929"/>
    <lineage>
        <taxon>Archaea</taxon>
        <taxon>Methanobacteriati</taxon>
        <taxon>Methanobacteriota</taxon>
        <taxon>Methanomada group</taxon>
        <taxon>Methanobacteria</taxon>
        <taxon>Methanobacteriales</taxon>
        <taxon>Methanobacteriaceae</taxon>
        <taxon>Methanothermobacter</taxon>
    </lineage>
</organism>